<organism>
    <name type="scientific">Prochlorococcus marinus subsp. pastoris (strain CCMP1986 / NIES-2087 / MED4)</name>
    <dbReference type="NCBI Taxonomy" id="59919"/>
    <lineage>
        <taxon>Bacteria</taxon>
        <taxon>Bacillati</taxon>
        <taxon>Cyanobacteriota</taxon>
        <taxon>Cyanophyceae</taxon>
        <taxon>Synechococcales</taxon>
        <taxon>Prochlorococcaceae</taxon>
        <taxon>Prochlorococcus</taxon>
    </lineage>
</organism>
<proteinExistence type="inferred from homology"/>
<protein>
    <recommendedName>
        <fullName evidence="1">Urease accessory protein UreF</fullName>
    </recommendedName>
</protein>
<comment type="function">
    <text evidence="1">Required for maturation of urease via the functional incorporation of the urease nickel metallocenter.</text>
</comment>
<comment type="subunit">
    <text evidence="1">UreD, UreF and UreG form a complex that acts as a GTP-hydrolysis-dependent molecular chaperone, activating the urease apoprotein by helping to assemble the nickel containing metallocenter of UreC. The UreE protein probably delivers the nickel.</text>
</comment>
<comment type="subcellular location">
    <subcellularLocation>
        <location evidence="1">Cytoplasm</location>
    </subcellularLocation>
</comment>
<comment type="similarity">
    <text evidence="1">Belongs to the UreF family.</text>
</comment>
<name>UREF_PROMP</name>
<dbReference type="EMBL" id="BX548174">
    <property type="protein sequence ID" value="CAE19427.1"/>
    <property type="molecule type" value="Genomic_DNA"/>
</dbReference>
<dbReference type="RefSeq" id="WP_011132601.1">
    <property type="nucleotide sequence ID" value="NC_005072.1"/>
</dbReference>
<dbReference type="SMR" id="Q7V1B1"/>
<dbReference type="STRING" id="59919.PMM0968"/>
<dbReference type="KEGG" id="pmm:PMM0968"/>
<dbReference type="eggNOG" id="COG0830">
    <property type="taxonomic scope" value="Bacteria"/>
</dbReference>
<dbReference type="HOGENOM" id="CLU_049215_2_1_3"/>
<dbReference type="OrthoDB" id="9798772at2"/>
<dbReference type="Proteomes" id="UP000001026">
    <property type="component" value="Chromosome"/>
</dbReference>
<dbReference type="GO" id="GO:0005737">
    <property type="term" value="C:cytoplasm"/>
    <property type="evidence" value="ECO:0007669"/>
    <property type="project" value="UniProtKB-SubCell"/>
</dbReference>
<dbReference type="GO" id="GO:0016151">
    <property type="term" value="F:nickel cation binding"/>
    <property type="evidence" value="ECO:0007669"/>
    <property type="project" value="UniProtKB-UniRule"/>
</dbReference>
<dbReference type="Gene3D" id="1.10.4190.10">
    <property type="entry name" value="Urease accessory protein UreF"/>
    <property type="match status" value="1"/>
</dbReference>
<dbReference type="HAMAP" id="MF_01385">
    <property type="entry name" value="UreF"/>
    <property type="match status" value="1"/>
</dbReference>
<dbReference type="InterPro" id="IPR002639">
    <property type="entry name" value="UreF"/>
</dbReference>
<dbReference type="InterPro" id="IPR038277">
    <property type="entry name" value="UreF_sf"/>
</dbReference>
<dbReference type="PANTHER" id="PTHR33620">
    <property type="entry name" value="UREASE ACCESSORY PROTEIN F"/>
    <property type="match status" value="1"/>
</dbReference>
<dbReference type="PANTHER" id="PTHR33620:SF1">
    <property type="entry name" value="UREASE ACCESSORY PROTEIN F"/>
    <property type="match status" value="1"/>
</dbReference>
<dbReference type="Pfam" id="PF01730">
    <property type="entry name" value="UreF"/>
    <property type="match status" value="1"/>
</dbReference>
<dbReference type="PIRSF" id="PIRSF009467">
    <property type="entry name" value="Ureas_acces_UreF"/>
    <property type="match status" value="1"/>
</dbReference>
<gene>
    <name evidence="1" type="primary">ureF</name>
    <name type="ordered locus">PMM0968</name>
</gene>
<accession>Q7V1B1</accession>
<keyword id="KW-0143">Chaperone</keyword>
<keyword id="KW-0963">Cytoplasm</keyword>
<keyword id="KW-0996">Nickel insertion</keyword>
<evidence type="ECO:0000255" key="1">
    <source>
        <dbReference type="HAMAP-Rule" id="MF_01385"/>
    </source>
</evidence>
<reference key="1">
    <citation type="journal article" date="2003" name="Nature">
        <title>Genome divergence in two Prochlorococcus ecotypes reflects oceanic niche differentiation.</title>
        <authorList>
            <person name="Rocap G."/>
            <person name="Larimer F.W."/>
            <person name="Lamerdin J.E."/>
            <person name="Malfatti S."/>
            <person name="Chain P."/>
            <person name="Ahlgren N.A."/>
            <person name="Arellano A."/>
            <person name="Coleman M."/>
            <person name="Hauser L."/>
            <person name="Hess W.R."/>
            <person name="Johnson Z.I."/>
            <person name="Land M.L."/>
            <person name="Lindell D."/>
            <person name="Post A.F."/>
            <person name="Regala W."/>
            <person name="Shah M."/>
            <person name="Shaw S.L."/>
            <person name="Steglich C."/>
            <person name="Sullivan M.B."/>
            <person name="Ting C.S."/>
            <person name="Tolonen A."/>
            <person name="Webb E.A."/>
            <person name="Zinser E.R."/>
            <person name="Chisholm S.W."/>
        </authorList>
    </citation>
    <scope>NUCLEOTIDE SEQUENCE [LARGE SCALE GENOMIC DNA]</scope>
    <source>
        <strain>CCMP1986 / NIES-2087 / MED4</strain>
    </source>
</reference>
<feature type="chain" id="PRO_1000145131" description="Urease accessory protein UreF">
    <location>
        <begin position="1"/>
        <end position="228"/>
    </location>
</feature>
<sequence>MKKNHLVKYLLISPSLPVGGFCYSEGLESYLKIKNLEEPDHIRNLITNELKIGQIRIEAKCLIEFFDIFVELKIANNINKNRRRLLSLDKWLLSFRDTVEIRDQQTQMAKSLFELTKEFGFEYLYEKNKNISWSLAWSWACFSFQINKLEMIENFIYAWTANQLSAAIRLIPMGSIKAQTIQLELLDLISEVSQEIVDSNINDLYVGNISLSMAQQNHNDLYTKLFRN</sequence>